<accession>Q86Y33</accession>
<accession>B7WNV8</accession>
<accession>B9EGL8</accession>
<accession>C9J6X8</accession>
<accession>C9JHE9</accession>
<accession>C9JKL5</accession>
<accession>Q86Y31</accession>
<accession>Q86Y32</accession>
<accession>Q8IUZ8</accession>
<accession>Q8N1S1</accession>
<accession>Q8NG56</accession>
<gene>
    <name evidence="12" type="primary">CDC20B</name>
    <name type="ORF">G6VTS76519</name>
</gene>
<dbReference type="EMBL" id="AB077043">
    <property type="protein sequence ID" value="BAC67701.1"/>
    <property type="molecule type" value="mRNA"/>
</dbReference>
<dbReference type="EMBL" id="AB077044">
    <property type="protein sequence ID" value="BAB97393.1"/>
    <property type="status" value="ALT_INIT"/>
    <property type="molecule type" value="mRNA"/>
</dbReference>
<dbReference type="EMBL" id="AB081750">
    <property type="protein sequence ID" value="BAC67702.1"/>
    <property type="molecule type" value="mRNA"/>
</dbReference>
<dbReference type="EMBL" id="AB086378">
    <property type="protein sequence ID" value="BAC67705.1"/>
    <property type="molecule type" value="mRNA"/>
</dbReference>
<dbReference type="EMBL" id="AK095246">
    <property type="protein sequence ID" value="BAC04508.1"/>
    <property type="molecule type" value="mRNA"/>
</dbReference>
<dbReference type="EMBL" id="AC091977">
    <property type="status" value="NOT_ANNOTATED_CDS"/>
    <property type="molecule type" value="Genomic_DNA"/>
</dbReference>
<dbReference type="EMBL" id="CH471123">
    <property type="protein sequence ID" value="EAW54901.1"/>
    <property type="molecule type" value="Genomic_DNA"/>
</dbReference>
<dbReference type="EMBL" id="BC037547">
    <property type="protein sequence ID" value="AAH37547.1"/>
    <property type="molecule type" value="mRNA"/>
</dbReference>
<dbReference type="EMBL" id="BC136572">
    <property type="protein sequence ID" value="AAI36573.1"/>
    <property type="molecule type" value="mRNA"/>
</dbReference>
<dbReference type="CCDS" id="CCDS3966.1">
    <molecule id="Q86Y33-2"/>
</dbReference>
<dbReference type="CCDS" id="CCDS47207.1">
    <molecule id="Q86Y33-3"/>
</dbReference>
<dbReference type="CCDS" id="CCDS54852.1">
    <molecule id="Q86Y33-1"/>
</dbReference>
<dbReference type="RefSeq" id="NP_001139206.2">
    <molecule id="Q86Y33-3"/>
    <property type="nucleotide sequence ID" value="NM_001145734.2"/>
</dbReference>
<dbReference type="RefSeq" id="NP_001163873.1">
    <molecule id="Q86Y33-1"/>
    <property type="nucleotide sequence ID" value="NM_001170402.1"/>
</dbReference>
<dbReference type="RefSeq" id="NP_689836.2">
    <molecule id="Q86Y33-2"/>
    <property type="nucleotide sequence ID" value="NM_152623.2"/>
</dbReference>
<dbReference type="SMR" id="Q86Y33"/>
<dbReference type="BioGRID" id="127940">
    <property type="interactions" value="34"/>
</dbReference>
<dbReference type="FunCoup" id="Q86Y33">
    <property type="interactions" value="11"/>
</dbReference>
<dbReference type="IntAct" id="Q86Y33">
    <property type="interactions" value="35"/>
</dbReference>
<dbReference type="STRING" id="9606.ENSP00000370781"/>
<dbReference type="GlyGen" id="Q86Y33">
    <property type="glycosylation" value="1 site, 1 O-linked glycan (1 site)"/>
</dbReference>
<dbReference type="iPTMnet" id="Q86Y33"/>
<dbReference type="PhosphoSitePlus" id="Q86Y33"/>
<dbReference type="BioMuta" id="CDC20B"/>
<dbReference type="DMDM" id="302393826"/>
<dbReference type="jPOST" id="Q86Y33"/>
<dbReference type="MassIVE" id="Q86Y33"/>
<dbReference type="PaxDb" id="9606-ENSP00000370781"/>
<dbReference type="PeptideAtlas" id="Q86Y33"/>
<dbReference type="ProteomicsDB" id="70361">
    <molecule id="Q86Y33-1"/>
</dbReference>
<dbReference type="ProteomicsDB" id="70362">
    <molecule id="Q86Y33-2"/>
</dbReference>
<dbReference type="ProteomicsDB" id="70363">
    <molecule id="Q86Y33-3"/>
</dbReference>
<dbReference type="ProteomicsDB" id="70364">
    <molecule id="Q86Y33-4"/>
</dbReference>
<dbReference type="ProteomicsDB" id="70365">
    <molecule id="Q86Y33-5"/>
</dbReference>
<dbReference type="Antibodypedia" id="23375">
    <property type="antibodies" value="138 antibodies from 19 providers"/>
</dbReference>
<dbReference type="DNASU" id="166979"/>
<dbReference type="Ensembl" id="ENST00000296733.5">
    <molecule id="Q86Y33-2"/>
    <property type="protein sequence ID" value="ENSP00000296733.1"/>
    <property type="gene ID" value="ENSG00000164287.13"/>
</dbReference>
<dbReference type="Ensembl" id="ENST00000322374.10">
    <molecule id="Q86Y33-3"/>
    <property type="protein sequence ID" value="ENSP00000315720.6"/>
    <property type="gene ID" value="ENSG00000164287.13"/>
</dbReference>
<dbReference type="Ensembl" id="ENST00000381375.7">
    <molecule id="Q86Y33-1"/>
    <property type="protein sequence ID" value="ENSP00000370781.2"/>
    <property type="gene ID" value="ENSG00000164287.13"/>
</dbReference>
<dbReference type="Ensembl" id="ENST00000507931.1">
    <molecule id="Q86Y33-5"/>
    <property type="protein sequence ID" value="ENSP00000423919.1"/>
    <property type="gene ID" value="ENSG00000164287.13"/>
</dbReference>
<dbReference type="Ensembl" id="ENST00000513180.5">
    <molecule id="Q86Y33-4"/>
    <property type="protein sequence ID" value="ENSP00000426776.1"/>
    <property type="gene ID" value="ENSG00000164287.13"/>
</dbReference>
<dbReference type="GeneID" id="166979"/>
<dbReference type="KEGG" id="hsa:166979"/>
<dbReference type="MANE-Select" id="ENST00000381375.7">
    <property type="protein sequence ID" value="ENSP00000370781.2"/>
    <property type="RefSeq nucleotide sequence ID" value="NM_001170402.1"/>
    <property type="RefSeq protein sequence ID" value="NP_001163873.1"/>
</dbReference>
<dbReference type="UCSC" id="uc003jpn.3">
    <molecule id="Q86Y33-1"/>
    <property type="organism name" value="human"/>
</dbReference>
<dbReference type="AGR" id="HGNC:24222"/>
<dbReference type="CTD" id="166979"/>
<dbReference type="DisGeNET" id="166979"/>
<dbReference type="GeneCards" id="CDC20B"/>
<dbReference type="HGNC" id="HGNC:24222">
    <property type="gene designation" value="CDC20B"/>
</dbReference>
<dbReference type="HPA" id="ENSG00000164287">
    <property type="expression patterns" value="Tissue enhanced (fallopian tube, kidney, testis)"/>
</dbReference>
<dbReference type="MIM" id="620335">
    <property type="type" value="gene"/>
</dbReference>
<dbReference type="neXtProt" id="NX_Q86Y33"/>
<dbReference type="OpenTargets" id="ENSG00000164287"/>
<dbReference type="PharmGKB" id="PA145149217"/>
<dbReference type="VEuPathDB" id="HostDB:ENSG00000164287"/>
<dbReference type="eggNOG" id="KOG0305">
    <property type="taxonomic scope" value="Eukaryota"/>
</dbReference>
<dbReference type="GeneTree" id="ENSGT00950000183104"/>
<dbReference type="HOGENOM" id="CLU_014831_6_2_1"/>
<dbReference type="InParanoid" id="Q86Y33"/>
<dbReference type="OMA" id="GTASVWK"/>
<dbReference type="OrthoDB" id="10263272at2759"/>
<dbReference type="PAN-GO" id="Q86Y33">
    <property type="GO annotations" value="5 GO annotations based on evolutionary models"/>
</dbReference>
<dbReference type="PhylomeDB" id="Q86Y33"/>
<dbReference type="TreeFam" id="TF337979"/>
<dbReference type="PathwayCommons" id="Q86Y33"/>
<dbReference type="SignaLink" id="Q86Y33"/>
<dbReference type="BioGRID-ORCS" id="166979">
    <property type="hits" value="10 hits in 1137 CRISPR screens"/>
</dbReference>
<dbReference type="ChiTaRS" id="CDC20B">
    <property type="organism name" value="human"/>
</dbReference>
<dbReference type="GenomeRNAi" id="166979"/>
<dbReference type="Pharos" id="Q86Y33">
    <property type="development level" value="Tbio"/>
</dbReference>
<dbReference type="PRO" id="PR:Q86Y33"/>
<dbReference type="Proteomes" id="UP000005640">
    <property type="component" value="Chromosome 5"/>
</dbReference>
<dbReference type="RNAct" id="Q86Y33">
    <property type="molecule type" value="protein"/>
</dbReference>
<dbReference type="Bgee" id="ENSG00000164287">
    <property type="expression patterns" value="Expressed in secondary oocyte and 33 other cell types or tissues"/>
</dbReference>
<dbReference type="GO" id="GO:0005680">
    <property type="term" value="C:anaphase-promoting complex"/>
    <property type="evidence" value="ECO:0000318"/>
    <property type="project" value="GO_Central"/>
</dbReference>
<dbReference type="GO" id="GO:0005737">
    <property type="term" value="C:cytoplasm"/>
    <property type="evidence" value="ECO:0007669"/>
    <property type="project" value="UniProtKB-SubCell"/>
</dbReference>
<dbReference type="GO" id="GO:0098536">
    <property type="term" value="C:deuterosome"/>
    <property type="evidence" value="ECO:0000314"/>
    <property type="project" value="UniProtKB"/>
</dbReference>
<dbReference type="GO" id="GO:0010997">
    <property type="term" value="F:anaphase-promoting complex binding"/>
    <property type="evidence" value="ECO:0000318"/>
    <property type="project" value="GO_Central"/>
</dbReference>
<dbReference type="GO" id="GO:1990757">
    <property type="term" value="F:ubiquitin ligase activator activity"/>
    <property type="evidence" value="ECO:0000318"/>
    <property type="project" value="GO_Central"/>
</dbReference>
<dbReference type="GO" id="GO:0031145">
    <property type="term" value="P:anaphase-promoting complex-dependent catabolic process"/>
    <property type="evidence" value="ECO:0000318"/>
    <property type="project" value="GO_Central"/>
</dbReference>
<dbReference type="GO" id="GO:0097742">
    <property type="term" value="P:de novo centriole assembly"/>
    <property type="evidence" value="ECO:0000314"/>
    <property type="project" value="UniProtKB"/>
</dbReference>
<dbReference type="GO" id="GO:1905786">
    <property type="term" value="P:positive regulation of anaphase-promoting complex-dependent catabolic process"/>
    <property type="evidence" value="ECO:0000318"/>
    <property type="project" value="GO_Central"/>
</dbReference>
<dbReference type="Gene3D" id="2.130.10.10">
    <property type="entry name" value="YVTN repeat-like/Quinoprotein amine dehydrogenase"/>
    <property type="match status" value="1"/>
</dbReference>
<dbReference type="InterPro" id="IPR033010">
    <property type="entry name" value="Cdc20/Fizzy"/>
</dbReference>
<dbReference type="InterPro" id="IPR015943">
    <property type="entry name" value="WD40/YVTN_repeat-like_dom_sf"/>
</dbReference>
<dbReference type="InterPro" id="IPR056150">
    <property type="entry name" value="WD40_CDC20-Fz"/>
</dbReference>
<dbReference type="InterPro" id="IPR019775">
    <property type="entry name" value="WD40_repeat_CS"/>
</dbReference>
<dbReference type="InterPro" id="IPR036322">
    <property type="entry name" value="WD40_repeat_dom_sf"/>
</dbReference>
<dbReference type="InterPro" id="IPR001680">
    <property type="entry name" value="WD40_rpt"/>
</dbReference>
<dbReference type="PANTHER" id="PTHR19918">
    <property type="entry name" value="CELL DIVISION CYCLE 20 CDC20 FIZZY -RELATED"/>
    <property type="match status" value="1"/>
</dbReference>
<dbReference type="PANTHER" id="PTHR19918:SF4">
    <property type="entry name" value="CELL DIVISION CYCLE PROTEIN 20 HOMOLOG B"/>
    <property type="match status" value="1"/>
</dbReference>
<dbReference type="Pfam" id="PF24807">
    <property type="entry name" value="WD40_CDC20-Fz"/>
    <property type="match status" value="1"/>
</dbReference>
<dbReference type="SMART" id="SM00320">
    <property type="entry name" value="WD40"/>
    <property type="match status" value="5"/>
</dbReference>
<dbReference type="SUPFAM" id="SSF50978">
    <property type="entry name" value="WD40 repeat-like"/>
    <property type="match status" value="1"/>
</dbReference>
<dbReference type="PROSITE" id="PS00678">
    <property type="entry name" value="WD_REPEATS_1"/>
    <property type="match status" value="1"/>
</dbReference>
<dbReference type="PROSITE" id="PS50082">
    <property type="entry name" value="WD_REPEATS_2"/>
    <property type="match status" value="3"/>
</dbReference>
<dbReference type="PROSITE" id="PS50294">
    <property type="entry name" value="WD_REPEATS_REGION"/>
    <property type="match status" value="1"/>
</dbReference>
<feature type="chain" id="PRO_0000339110" description="Cell division cycle protein 20 homolog B">
    <location>
        <begin position="1"/>
        <end position="519"/>
    </location>
</feature>
<feature type="repeat" description="WD 1">
    <location>
        <begin position="229"/>
        <end position="266"/>
    </location>
</feature>
<feature type="repeat" description="WD 2">
    <location>
        <begin position="271"/>
        <end position="310"/>
    </location>
</feature>
<feature type="repeat" description="WD 3">
    <location>
        <begin position="311"/>
        <end position="341"/>
    </location>
</feature>
<feature type="repeat" description="WD 4">
    <location>
        <begin position="353"/>
        <end position="392"/>
    </location>
</feature>
<feature type="repeat" description="WD 5">
    <location>
        <begin position="399"/>
        <end position="441"/>
    </location>
</feature>
<feature type="repeat" description="WD 6">
    <location>
        <begin position="443"/>
        <end position="484"/>
    </location>
</feature>
<feature type="repeat" description="WD 7">
    <location>
        <begin position="487"/>
        <end position="519"/>
    </location>
</feature>
<feature type="region of interest" description="Disordered" evidence="2">
    <location>
        <begin position="79"/>
        <end position="133"/>
    </location>
</feature>
<feature type="compositionally biased region" description="Polar residues" evidence="2">
    <location>
        <begin position="79"/>
        <end position="98"/>
    </location>
</feature>
<feature type="compositionally biased region" description="Basic and acidic residues" evidence="2">
    <location>
        <begin position="110"/>
        <end position="125"/>
    </location>
</feature>
<feature type="splice variant" id="VSP_034089" description="In isoform 5." evidence="9">
    <location>
        <begin position="22"/>
        <end position="42"/>
    </location>
</feature>
<feature type="splice variant" id="VSP_034090" description="In isoform 5." evidence="9">
    <original>GCKDGVRDESFHLKSSGDIN</original>
    <variation>DHFSGSMKKRFEQEDVGGKD</variation>
    <location>
        <begin position="194"/>
        <end position="213"/>
    </location>
</feature>
<feature type="splice variant" id="VSP_034091" description="In isoform 5." evidence="9">
    <location>
        <begin position="214"/>
        <end position="519"/>
    </location>
</feature>
<feature type="splice variant" id="VSP_034092" description="In isoform 4." evidence="10">
    <original>SGSRLGRVYHHDVRVAQHHVGTLRHKQAVCALKWSPDGRLLSS</original>
    <variation>RLEFSGVISAHCNLHLPSSWDYRRPPPCLVGQDWGVFIITMFG</variation>
    <location>
        <begin position="330"/>
        <end position="372"/>
    </location>
</feature>
<feature type="splice variant" id="VSP_034093" description="In isoform 4." evidence="10">
    <location>
        <begin position="373"/>
        <end position="519"/>
    </location>
</feature>
<feature type="splice variant" id="VSP_034094" description="In isoform 3." evidence="10">
    <location>
        <begin position="406"/>
        <end position="447"/>
    </location>
</feature>
<feature type="splice variant" id="VSP_034095" description="In isoform 2." evidence="8 10">
    <location>
        <begin position="483"/>
        <end position="486"/>
    </location>
</feature>
<feature type="sequence variant" id="VAR_043860" description="In dbSNP:rs173042.">
    <original>T</original>
    <variation>P</variation>
    <location>
        <position position="8"/>
    </location>
</feature>
<feature type="sequence variant" id="VAR_043861" description="In dbSNP:rs423074.">
    <original>E</original>
    <variation>K</variation>
    <location>
        <position position="17"/>
    </location>
</feature>
<feature type="sequence variant" id="VAR_043862" description="In dbSNP:rs34132993.">
    <original>T</original>
    <variation>S</variation>
    <location>
        <position position="97"/>
    </location>
</feature>
<feature type="sequence variant" id="VAR_043863" description="In dbSNP:rs1021580." evidence="3 4 6 7">
    <original>R</original>
    <variation>C</variation>
    <location>
        <position position="121"/>
    </location>
</feature>
<feature type="sequence variant" id="VAR_043864" description="In dbSNP:rs3104230." evidence="3 4 6 7">
    <original>S</original>
    <variation>A</variation>
    <location>
        <position position="496"/>
    </location>
</feature>
<feature type="sequence variant" id="VAR_043865" description="In dbSNP:rs444527." evidence="4 6">
    <original>R</original>
    <variation>W</variation>
    <location>
        <position position="503"/>
    </location>
</feature>
<name>CD20B_HUMAN</name>
<sequence length="519" mass="57335">MEWKLERTAPRRVRTEEEMLWESIMRVLSKDLKQKRSQDSANVLDSVNATYSDFKSNFAKRLSAEVPVASSPITTRWQQSQTRALSSDSFGEEQSTTYLPEASGSVLKTPPEKETLTLGSRKEQLKTPSKGISETSNSALHFCKAPHAMDRDWKESVASKGQKCLKQLFVTQNVVQQANGKMQLCEQSECVWKGCKDGVRDESFHLKSSGDINDSILQPEVKIHITGLRNDYYLNILDWSFQNLVAIALGSAVYIWNGENHNGIENIDLSLTCNYISSVSWIKEGTCLAVGTSEGEVQLWDVVTKKRLRNMLGHLSVVGALSWNHFILSSGSRLGRVYHHDVRVAQHHVGTLRHKQAVCALKWSPDGRLLSSGCSDGLLTIWPHDPGASAQGQPLKVITQSTAVKAMDWCPWQSGVLAIGGGMKDGRLHILDINAGKSIQTPSTNSQICSLIWLPKTKEIATGQGTPKNDVTVWTCPTVSRSGGFFGHRGRVLHLSLSPDQTRVFSAAADGTASVWNCY</sequence>
<protein>
    <recommendedName>
        <fullName evidence="11">Cell division cycle protein 20 homolog B</fullName>
    </recommendedName>
</protein>
<keyword id="KW-0025">Alternative splicing</keyword>
<keyword id="KW-0963">Cytoplasm</keyword>
<keyword id="KW-1267">Proteomics identification</keyword>
<keyword id="KW-1185">Reference proteome</keyword>
<keyword id="KW-0677">Repeat</keyword>
<keyword id="KW-0853">WD repeat</keyword>
<reference key="1">
    <citation type="submission" date="2002-01" db="EMBL/GenBank/DDBJ databases">
        <title>CDC20-like protein.</title>
        <authorList>
            <person name="Hayashi A."/>
            <person name="Saito T."/>
        </authorList>
    </citation>
    <scope>NUCLEOTIDE SEQUENCE [MRNA] (ISOFORMS 1; 2; 3 AND 4)</scope>
    <scope>VARIANTS CYS-121; ALA-496 AND TRP-503</scope>
</reference>
<reference key="2">
    <citation type="journal article" date="2004" name="Nat. Genet.">
        <title>Complete sequencing and characterization of 21,243 full-length human cDNAs.</title>
        <authorList>
            <person name="Ota T."/>
            <person name="Suzuki Y."/>
            <person name="Nishikawa T."/>
            <person name="Otsuki T."/>
            <person name="Sugiyama T."/>
            <person name="Irie R."/>
            <person name="Wakamatsu A."/>
            <person name="Hayashi K."/>
            <person name="Sato H."/>
            <person name="Nagai K."/>
            <person name="Kimura K."/>
            <person name="Makita H."/>
            <person name="Sekine M."/>
            <person name="Obayashi M."/>
            <person name="Nishi T."/>
            <person name="Shibahara T."/>
            <person name="Tanaka T."/>
            <person name="Ishii S."/>
            <person name="Yamamoto J."/>
            <person name="Saito K."/>
            <person name="Kawai Y."/>
            <person name="Isono Y."/>
            <person name="Nakamura Y."/>
            <person name="Nagahari K."/>
            <person name="Murakami K."/>
            <person name="Yasuda T."/>
            <person name="Iwayanagi T."/>
            <person name="Wagatsuma M."/>
            <person name="Shiratori A."/>
            <person name="Sudo H."/>
            <person name="Hosoiri T."/>
            <person name="Kaku Y."/>
            <person name="Kodaira H."/>
            <person name="Kondo H."/>
            <person name="Sugawara M."/>
            <person name="Takahashi M."/>
            <person name="Kanda K."/>
            <person name="Yokoi T."/>
            <person name="Furuya T."/>
            <person name="Kikkawa E."/>
            <person name="Omura Y."/>
            <person name="Abe K."/>
            <person name="Kamihara K."/>
            <person name="Katsuta N."/>
            <person name="Sato K."/>
            <person name="Tanikawa M."/>
            <person name="Yamazaki M."/>
            <person name="Ninomiya K."/>
            <person name="Ishibashi T."/>
            <person name="Yamashita H."/>
            <person name="Murakawa K."/>
            <person name="Fujimori K."/>
            <person name="Tanai H."/>
            <person name="Kimata M."/>
            <person name="Watanabe M."/>
            <person name="Hiraoka S."/>
            <person name="Chiba Y."/>
            <person name="Ishida S."/>
            <person name="Ono Y."/>
            <person name="Takiguchi S."/>
            <person name="Watanabe S."/>
            <person name="Yosida M."/>
            <person name="Hotuta T."/>
            <person name="Kusano J."/>
            <person name="Kanehori K."/>
            <person name="Takahashi-Fujii A."/>
            <person name="Hara H."/>
            <person name="Tanase T.-O."/>
            <person name="Nomura Y."/>
            <person name="Togiya S."/>
            <person name="Komai F."/>
            <person name="Hara R."/>
            <person name="Takeuchi K."/>
            <person name="Arita M."/>
            <person name="Imose N."/>
            <person name="Musashino K."/>
            <person name="Yuuki H."/>
            <person name="Oshima A."/>
            <person name="Sasaki N."/>
            <person name="Aotsuka S."/>
            <person name="Yoshikawa Y."/>
            <person name="Matsunawa H."/>
            <person name="Ichihara T."/>
            <person name="Shiohata N."/>
            <person name="Sano S."/>
            <person name="Moriya S."/>
            <person name="Momiyama H."/>
            <person name="Satoh N."/>
            <person name="Takami S."/>
            <person name="Terashima Y."/>
            <person name="Suzuki O."/>
            <person name="Nakagawa S."/>
            <person name="Senoh A."/>
            <person name="Mizoguchi H."/>
            <person name="Goto Y."/>
            <person name="Shimizu F."/>
            <person name="Wakebe H."/>
            <person name="Hishigaki H."/>
            <person name="Watanabe T."/>
            <person name="Sugiyama A."/>
            <person name="Takemoto M."/>
            <person name="Kawakami B."/>
            <person name="Yamazaki M."/>
            <person name="Watanabe K."/>
            <person name="Kumagai A."/>
            <person name="Itakura S."/>
            <person name="Fukuzumi Y."/>
            <person name="Fujimori Y."/>
            <person name="Komiyama M."/>
            <person name="Tashiro H."/>
            <person name="Tanigami A."/>
            <person name="Fujiwara T."/>
            <person name="Ono T."/>
            <person name="Yamada K."/>
            <person name="Fujii Y."/>
            <person name="Ozaki K."/>
            <person name="Hirao M."/>
            <person name="Ohmori Y."/>
            <person name="Kawabata A."/>
            <person name="Hikiji T."/>
            <person name="Kobatake N."/>
            <person name="Inagaki H."/>
            <person name="Ikema Y."/>
            <person name="Okamoto S."/>
            <person name="Okitani R."/>
            <person name="Kawakami T."/>
            <person name="Noguchi S."/>
            <person name="Itoh T."/>
            <person name="Shigeta K."/>
            <person name="Senba T."/>
            <person name="Matsumura K."/>
            <person name="Nakajima Y."/>
            <person name="Mizuno T."/>
            <person name="Morinaga M."/>
            <person name="Sasaki M."/>
            <person name="Togashi T."/>
            <person name="Oyama M."/>
            <person name="Hata H."/>
            <person name="Watanabe M."/>
            <person name="Komatsu T."/>
            <person name="Mizushima-Sugano J."/>
            <person name="Satoh T."/>
            <person name="Shirai Y."/>
            <person name="Takahashi Y."/>
            <person name="Nakagawa K."/>
            <person name="Okumura K."/>
            <person name="Nagase T."/>
            <person name="Nomura N."/>
            <person name="Kikuchi H."/>
            <person name="Masuho Y."/>
            <person name="Yamashita R."/>
            <person name="Nakai K."/>
            <person name="Yada T."/>
            <person name="Nakamura Y."/>
            <person name="Ohara O."/>
            <person name="Isogai T."/>
            <person name="Sugano S."/>
        </authorList>
    </citation>
    <scope>NUCLEOTIDE SEQUENCE [LARGE SCALE MRNA] (ISOFORM 2)</scope>
    <scope>VARIANTS CYS-121 AND ALA-496</scope>
    <source>
        <tissue>Tongue</tissue>
    </source>
</reference>
<reference key="3">
    <citation type="journal article" date="2004" name="Nature">
        <title>The DNA sequence and comparative analysis of human chromosome 5.</title>
        <authorList>
            <person name="Schmutz J."/>
            <person name="Martin J."/>
            <person name="Terry A."/>
            <person name="Couronne O."/>
            <person name="Grimwood J."/>
            <person name="Lowry S."/>
            <person name="Gordon L.A."/>
            <person name="Scott D."/>
            <person name="Xie G."/>
            <person name="Huang W."/>
            <person name="Hellsten U."/>
            <person name="Tran-Gyamfi M."/>
            <person name="She X."/>
            <person name="Prabhakar S."/>
            <person name="Aerts A."/>
            <person name="Altherr M."/>
            <person name="Bajorek E."/>
            <person name="Black S."/>
            <person name="Branscomb E."/>
            <person name="Caoile C."/>
            <person name="Challacombe J.F."/>
            <person name="Chan Y.M."/>
            <person name="Denys M."/>
            <person name="Detter J.C."/>
            <person name="Escobar J."/>
            <person name="Flowers D."/>
            <person name="Fotopulos D."/>
            <person name="Glavina T."/>
            <person name="Gomez M."/>
            <person name="Gonzales E."/>
            <person name="Goodstein D."/>
            <person name="Grigoriev I."/>
            <person name="Groza M."/>
            <person name="Hammon N."/>
            <person name="Hawkins T."/>
            <person name="Haydu L."/>
            <person name="Israni S."/>
            <person name="Jett J."/>
            <person name="Kadner K."/>
            <person name="Kimball H."/>
            <person name="Kobayashi A."/>
            <person name="Lopez F."/>
            <person name="Lou Y."/>
            <person name="Martinez D."/>
            <person name="Medina C."/>
            <person name="Morgan J."/>
            <person name="Nandkeshwar R."/>
            <person name="Noonan J.P."/>
            <person name="Pitluck S."/>
            <person name="Pollard M."/>
            <person name="Predki P."/>
            <person name="Priest J."/>
            <person name="Ramirez L."/>
            <person name="Retterer J."/>
            <person name="Rodriguez A."/>
            <person name="Rogers S."/>
            <person name="Salamov A."/>
            <person name="Salazar A."/>
            <person name="Thayer N."/>
            <person name="Tice H."/>
            <person name="Tsai M."/>
            <person name="Ustaszewska A."/>
            <person name="Vo N."/>
            <person name="Wheeler J."/>
            <person name="Wu K."/>
            <person name="Yang J."/>
            <person name="Dickson M."/>
            <person name="Cheng J.-F."/>
            <person name="Eichler E.E."/>
            <person name="Olsen A."/>
            <person name="Pennacchio L.A."/>
            <person name="Rokhsar D.S."/>
            <person name="Richardson P."/>
            <person name="Lucas S.M."/>
            <person name="Myers R.M."/>
            <person name="Rubin E.M."/>
        </authorList>
    </citation>
    <scope>NUCLEOTIDE SEQUENCE [LARGE SCALE GENOMIC DNA]</scope>
</reference>
<reference key="4">
    <citation type="submission" date="2005-07" db="EMBL/GenBank/DDBJ databases">
        <authorList>
            <person name="Mural R.J."/>
            <person name="Istrail S."/>
            <person name="Sutton G.G."/>
            <person name="Florea L."/>
            <person name="Halpern A.L."/>
            <person name="Mobarry C.M."/>
            <person name="Lippert R."/>
            <person name="Walenz B."/>
            <person name="Shatkay H."/>
            <person name="Dew I."/>
            <person name="Miller J.R."/>
            <person name="Flanigan M.J."/>
            <person name="Edwards N.J."/>
            <person name="Bolanos R."/>
            <person name="Fasulo D."/>
            <person name="Halldorsson B.V."/>
            <person name="Hannenhalli S."/>
            <person name="Turner R."/>
            <person name="Yooseph S."/>
            <person name="Lu F."/>
            <person name="Nusskern D.R."/>
            <person name="Shue B.C."/>
            <person name="Zheng X.H."/>
            <person name="Zhong F."/>
            <person name="Delcher A.L."/>
            <person name="Huson D.H."/>
            <person name="Kravitz S.A."/>
            <person name="Mouchard L."/>
            <person name="Reinert K."/>
            <person name="Remington K.A."/>
            <person name="Clark A.G."/>
            <person name="Waterman M.S."/>
            <person name="Eichler E.E."/>
            <person name="Adams M.D."/>
            <person name="Hunkapiller M.W."/>
            <person name="Myers E.W."/>
            <person name="Venter J.C."/>
        </authorList>
    </citation>
    <scope>NUCLEOTIDE SEQUENCE [LARGE SCALE GENOMIC DNA]</scope>
    <scope>VARIANTS CYS-121 AND ALA-496</scope>
</reference>
<reference key="5">
    <citation type="journal article" date="2004" name="Genome Res.">
        <title>The status, quality, and expansion of the NIH full-length cDNA project: the Mammalian Gene Collection (MGC).</title>
        <authorList>
            <consortium name="The MGC Project Team"/>
        </authorList>
    </citation>
    <scope>NUCLEOTIDE SEQUENCE [LARGE SCALE MRNA] (ISOFORMS 1 AND 5)</scope>
    <scope>VARIANTS CYS-121; ALA-496 AND TRP-503</scope>
    <source>
        <tissue>Lung</tissue>
        <tissue>Testis</tissue>
    </source>
</reference>
<reference key="6">
    <citation type="journal article" date="2018" name="Nat. Commun.">
        <title>CDC20B is required for deuterosome-mediated centriole production in multiciliated cells.</title>
        <authorList>
            <person name="Revinski D.R."/>
            <person name="Zaragosi L.E."/>
            <person name="Boutin C."/>
            <person name="Ruiz-Garcia S."/>
            <person name="Deprez M."/>
            <person name="Thome V."/>
            <person name="Rosnet O."/>
            <person name="Gay A.S."/>
            <person name="Mercey O."/>
            <person name="Paquet A."/>
            <person name="Pons N."/>
            <person name="Ponzio G."/>
            <person name="Marcet B."/>
            <person name="Kodjabachian L."/>
            <person name="Barbry P."/>
        </authorList>
    </citation>
    <scope>SUBCELLULAR LOCATION</scope>
    <scope>TISSUE SPECIFICITY</scope>
</reference>
<organism>
    <name type="scientific">Homo sapiens</name>
    <name type="common">Human</name>
    <dbReference type="NCBI Taxonomy" id="9606"/>
    <lineage>
        <taxon>Eukaryota</taxon>
        <taxon>Metazoa</taxon>
        <taxon>Chordata</taxon>
        <taxon>Craniata</taxon>
        <taxon>Vertebrata</taxon>
        <taxon>Euteleostomi</taxon>
        <taxon>Mammalia</taxon>
        <taxon>Eutheria</taxon>
        <taxon>Euarchontoglires</taxon>
        <taxon>Primates</taxon>
        <taxon>Haplorrhini</taxon>
        <taxon>Catarrhini</taxon>
        <taxon>Hominidae</taxon>
        <taxon>Homo</taxon>
    </lineage>
</organism>
<proteinExistence type="evidence at protein level"/>
<evidence type="ECO:0000250" key="1">
    <source>
        <dbReference type="UniProtKB" id="A0A1L8I2C5"/>
    </source>
</evidence>
<evidence type="ECO:0000256" key="2">
    <source>
        <dbReference type="SAM" id="MobiDB-lite"/>
    </source>
</evidence>
<evidence type="ECO:0000269" key="3">
    <source>
    </source>
</evidence>
<evidence type="ECO:0000269" key="4">
    <source>
    </source>
</evidence>
<evidence type="ECO:0000269" key="5">
    <source>
    </source>
</evidence>
<evidence type="ECO:0000269" key="6">
    <source ref="1"/>
</evidence>
<evidence type="ECO:0000269" key="7">
    <source ref="4"/>
</evidence>
<evidence type="ECO:0000303" key="8">
    <source>
    </source>
</evidence>
<evidence type="ECO:0000303" key="9">
    <source>
    </source>
</evidence>
<evidence type="ECO:0000303" key="10">
    <source ref="1"/>
</evidence>
<evidence type="ECO:0000305" key="11"/>
<evidence type="ECO:0000312" key="12">
    <source>
        <dbReference type="HGNC" id="HGNC:24222"/>
    </source>
</evidence>
<comment type="function">
    <text evidence="1">Protein regulator of centriole-deuterosome disengagement and subsequently participates in the ciliogenesis in multiciliated cells (MCCs).</text>
</comment>
<comment type="interaction">
    <interactant intactId="EBI-10260504">
        <id>Q86Y33</id>
    </interactant>
    <interactant intactId="EBI-2808286">
        <id>Q2TAC2</id>
        <label>CCDC57</label>
    </interactant>
    <organismsDiffer>false</organismsDiffer>
    <experiments>3</experiments>
</comment>
<comment type="interaction">
    <interactant intactId="EBI-10260504">
        <id>Q86Y33</id>
    </interactant>
    <interactant intactId="EBI-618309">
        <id>Q08379</id>
        <label>GOLGA2</label>
    </interactant>
    <organismsDiffer>false</organismsDiffer>
    <experiments>3</experiments>
</comment>
<comment type="interaction">
    <interactant intactId="EBI-10260504">
        <id>Q86Y33</id>
    </interactant>
    <interactant intactId="EBI-948001">
        <id>Q15323</id>
        <label>KRT31</label>
    </interactant>
    <organismsDiffer>false</organismsDiffer>
    <experiments>3</experiments>
</comment>
<comment type="interaction">
    <interactant intactId="EBI-10260504">
        <id>Q86Y33</id>
    </interactant>
    <interactant intactId="EBI-10171697">
        <id>Q6A162</id>
        <label>KRT40</label>
    </interactant>
    <organismsDiffer>false</organismsDiffer>
    <experiments>3</experiments>
</comment>
<comment type="interaction">
    <interactant intactId="EBI-10260504">
        <id>Q86Y33</id>
    </interactant>
    <interactant intactId="EBI-10178634">
        <id>P43364-2</id>
        <label>MAGEA11</label>
    </interactant>
    <organismsDiffer>false</organismsDiffer>
    <experiments>3</experiments>
</comment>
<comment type="interaction">
    <interactant intactId="EBI-10260504">
        <id>Q86Y33</id>
    </interactant>
    <interactant intactId="EBI-742948">
        <id>Q5JR59</id>
        <label>MTUS2</label>
    </interactant>
    <organismsDiffer>false</organismsDiffer>
    <experiments>3</experiments>
</comment>
<comment type="interaction">
    <interactant intactId="EBI-10260504">
        <id>Q86Y33</id>
    </interactant>
    <interactant intactId="EBI-721354">
        <id>Q9NYY3</id>
        <label>PLK2</label>
    </interactant>
    <organismsDiffer>false</organismsDiffer>
    <experiments>3</experiments>
</comment>
<comment type="interaction">
    <interactant intactId="EBI-10260504">
        <id>Q86Y33</id>
    </interactant>
    <interactant intactId="EBI-413317">
        <id>Q96R06</id>
        <label>SPAG5</label>
    </interactant>
    <organismsDiffer>false</organismsDiffer>
    <experiments>3</experiments>
</comment>
<comment type="interaction">
    <interactant intactId="EBI-10260504">
        <id>Q86Y33</id>
    </interactant>
    <interactant intactId="EBI-355744">
        <id>Q12933</id>
        <label>TRAF2</label>
    </interactant>
    <organismsDiffer>false</organismsDiffer>
    <experiments>3</experiments>
</comment>
<comment type="interaction">
    <interactant intactId="EBI-10260504">
        <id>Q86Y33</id>
    </interactant>
    <interactant intactId="EBI-740098">
        <id>P36406</id>
        <label>TRIM23</label>
    </interactant>
    <organismsDiffer>false</organismsDiffer>
    <experiments>3</experiments>
</comment>
<comment type="interaction">
    <interactant intactId="EBI-10260504">
        <id>Q86Y33</id>
    </interactant>
    <interactant intactId="EBI-719493">
        <id>P14373</id>
        <label>TRIM27</label>
    </interactant>
    <organismsDiffer>false</organismsDiffer>
    <experiments>3</experiments>
</comment>
<comment type="interaction">
    <interactant intactId="EBI-10260504">
        <id>Q86Y33</id>
    </interactant>
    <interactant intactId="EBI-741602">
        <id>O94972</id>
        <label>TRIM37</label>
    </interactant>
    <organismsDiffer>false</organismsDiffer>
    <experiments>3</experiments>
</comment>
<comment type="interaction">
    <interactant intactId="EBI-11983537">
        <id>Q86Y33-5</id>
    </interactant>
    <interactant intactId="EBI-2548012">
        <id>Q9H2G9</id>
        <label>BLZF1</label>
    </interactant>
    <organismsDiffer>false</organismsDiffer>
    <experiments>5</experiments>
</comment>
<comment type="interaction">
    <interactant intactId="EBI-11983537">
        <id>Q86Y33-5</id>
    </interactant>
    <interactant intactId="EBI-750641">
        <id>Q5TD97</id>
        <label>FHL5</label>
    </interactant>
    <organismsDiffer>false</organismsDiffer>
    <experiments>3</experiments>
</comment>
<comment type="interaction">
    <interactant intactId="EBI-11983537">
        <id>Q86Y33-5</id>
    </interactant>
    <interactant intactId="EBI-356700">
        <id>P57678</id>
        <label>GEMIN4</label>
    </interactant>
    <organismsDiffer>false</organismsDiffer>
    <experiments>3</experiments>
</comment>
<comment type="interaction">
    <interactant intactId="EBI-11983537">
        <id>Q86Y33-5</id>
    </interactant>
    <interactant intactId="EBI-374781">
        <id>O76003</id>
        <label>GLRX3</label>
    </interactant>
    <organismsDiffer>false</organismsDiffer>
    <experiments>3</experiments>
</comment>
<comment type="interaction">
    <interactant intactId="EBI-11983537">
        <id>Q86Y33-5</id>
    </interactant>
    <interactant intactId="EBI-618309">
        <id>Q08379</id>
        <label>GOLGA2</label>
    </interactant>
    <organismsDiffer>false</organismsDiffer>
    <experiments>3</experiments>
</comment>
<comment type="interaction">
    <interactant intactId="EBI-11983537">
        <id>Q86Y33-5</id>
    </interactant>
    <interactant intactId="EBI-2556193">
        <id>Q63ZY3</id>
        <label>KANK2</label>
    </interactant>
    <organismsDiffer>false</organismsDiffer>
    <experiments>3</experiments>
</comment>
<comment type="interaction">
    <interactant intactId="EBI-11983537">
        <id>Q86Y33-5</id>
    </interactant>
    <interactant intactId="EBI-1047093">
        <id>O76011</id>
        <label>KRT34</label>
    </interactant>
    <organismsDiffer>false</organismsDiffer>
    <experiments>3</experiments>
</comment>
<comment type="interaction">
    <interactant intactId="EBI-11983537">
        <id>Q86Y33-5</id>
    </interactant>
    <interactant intactId="EBI-724076">
        <id>Q99750</id>
        <label>MDFI</label>
    </interactant>
    <organismsDiffer>false</organismsDiffer>
    <experiments>3</experiments>
</comment>
<comment type="interaction">
    <interactant intactId="EBI-11983537">
        <id>Q86Y33-5</id>
    </interactant>
    <interactant intactId="EBI-742388">
        <id>Q9H8W4</id>
        <label>PLEKHF2</label>
    </interactant>
    <organismsDiffer>false</organismsDiffer>
    <experiments>3</experiments>
</comment>
<comment type="interaction">
    <interactant intactId="EBI-11983537">
        <id>Q86Y33-5</id>
    </interactant>
    <interactant intactId="EBI-2554984">
        <id>Q9Y6A5</id>
        <label>TACC3</label>
    </interactant>
    <organismsDiffer>false</organismsDiffer>
    <experiments>3</experiments>
</comment>
<comment type="interaction">
    <interactant intactId="EBI-11983537">
        <id>Q86Y33-5</id>
    </interactant>
    <interactant intactId="EBI-11952764">
        <id>Q99081-3</id>
        <label>TCF12</label>
    </interactant>
    <organismsDiffer>false</organismsDiffer>
    <experiments>3</experiments>
</comment>
<comment type="interaction">
    <interactant intactId="EBI-11983537">
        <id>Q86Y33-5</id>
    </interactant>
    <interactant intactId="EBI-355744">
        <id>Q12933</id>
        <label>TRAF2</label>
    </interactant>
    <organismsDiffer>false</organismsDiffer>
    <experiments>3</experiments>
</comment>
<comment type="interaction">
    <interactant intactId="EBI-11983537">
        <id>Q86Y33-5</id>
    </interactant>
    <interactant intactId="EBI-719493">
        <id>P14373</id>
        <label>TRIM27</label>
    </interactant>
    <organismsDiffer>false</organismsDiffer>
    <experiments>3</experiments>
</comment>
<comment type="interaction">
    <interactant intactId="EBI-11983537">
        <id>Q86Y33-5</id>
    </interactant>
    <interactant intactId="EBI-741602">
        <id>O94972</id>
        <label>TRIM37</label>
    </interactant>
    <organismsDiffer>false</organismsDiffer>
    <experiments>3</experiments>
</comment>
<comment type="interaction">
    <interactant intactId="EBI-11983537">
        <id>Q86Y33-5</id>
    </interactant>
    <interactant intactId="EBI-2799833">
        <id>Q8N1B4</id>
        <label>VPS52</label>
    </interactant>
    <organismsDiffer>false</organismsDiffer>
    <experiments>3</experiments>
</comment>
<comment type="subcellular location">
    <subcellularLocation>
        <location>Cytoplasm</location>
    </subcellularLocation>
    <text evidence="5">Tightly associated to mature deuterosomes.</text>
</comment>
<comment type="alternative products">
    <event type="alternative splicing"/>
    <isoform>
        <id>Q86Y33-1</id>
        <name>1</name>
        <sequence type="displayed"/>
    </isoform>
    <isoform>
        <id>Q86Y33-2</id>
        <name>2</name>
        <sequence type="described" ref="VSP_034095"/>
    </isoform>
    <isoform>
        <id>Q86Y33-3</id>
        <name>3</name>
        <sequence type="described" ref="VSP_034094"/>
    </isoform>
    <isoform>
        <id>Q86Y33-4</id>
        <name>4</name>
        <sequence type="described" ref="VSP_034092 VSP_034093"/>
    </isoform>
    <isoform>
        <id>Q86Y33-5</id>
        <name>5</name>
        <sequence type="described" ref="VSP_034089 VSP_034090 VSP_034091"/>
    </isoform>
</comment>
<comment type="tissue specificity">
    <text evidence="5">Expressed in multiciliated cells (MCCs).</text>
</comment>
<comment type="similarity">
    <text evidence="11">Belongs to the WD repeat CDC20/Fizzy family.</text>
</comment>
<comment type="sequence caution" evidence="11">
    <conflict type="erroneous initiation">
        <sequence resource="EMBL-CDS" id="BAB97393"/>
    </conflict>
    <text>Extended N-terminus.</text>
</comment>